<organism>
    <name type="scientific">Lytechinus variegatus</name>
    <name type="common">Green sea urchin</name>
    <name type="synonym">Echinus variegatus</name>
    <dbReference type="NCBI Taxonomy" id="7654"/>
    <lineage>
        <taxon>Eukaryota</taxon>
        <taxon>Metazoa</taxon>
        <taxon>Echinodermata</taxon>
        <taxon>Eleutherozoa</taxon>
        <taxon>Echinozoa</taxon>
        <taxon>Echinoidea</taxon>
        <taxon>Euechinoidea</taxon>
        <taxon>Echinacea</taxon>
        <taxon>Temnopleuroida</taxon>
        <taxon>Toxopneustidae</taxon>
        <taxon>Lytechinus</taxon>
    </lineage>
</organism>
<protein>
    <recommendedName>
        <fullName>Transcription factor SUM-1</fullName>
    </recommendedName>
    <alternativeName>
        <fullName>Sea urchin myogenic factor 1</fullName>
    </alternativeName>
</protein>
<keyword id="KW-0238">DNA-binding</keyword>
<keyword id="KW-0539">Nucleus</keyword>
<keyword id="KW-0804">Transcription</keyword>
<keyword id="KW-0805">Transcription regulation</keyword>
<comment type="function">
    <text>Regulatory factor during embryogenesis. Conversion of pluripotent secondary mesenchyme cells to myogenic cells. It binds to the MCK enhancer element.</text>
</comment>
<comment type="subunit">
    <text>Efficient DNA binding requires dimerization with another bHLH protein. Homodimer, and heterodimer with the ubiquitous bHLH protein E12.</text>
</comment>
<comment type="subcellular location">
    <subcellularLocation>
        <location>Nucleus</location>
    </subcellularLocation>
</comment>
<comment type="developmental stage">
    <text>Expressed up from the gastrulation stage, maximal concentration during the prism stage and diminishing concentrations in the differentiating myocytes.</text>
</comment>
<comment type="sequence caution" evidence="3">
    <conflict type="erroneous initiation">
        <sequence resource="EMBL-CDS" id="AAA30009"/>
    </conflict>
</comment>
<evidence type="ECO:0000255" key="1">
    <source>
        <dbReference type="PROSITE-ProRule" id="PRU00981"/>
    </source>
</evidence>
<evidence type="ECO:0000256" key="2">
    <source>
        <dbReference type="SAM" id="MobiDB-lite"/>
    </source>
</evidence>
<evidence type="ECO:0000305" key="3"/>
<feature type="chain" id="PRO_0000127453" description="Transcription factor SUM-1">
    <location>
        <begin position="1"/>
        <end position="260"/>
    </location>
</feature>
<feature type="domain" description="bHLH" evidence="1">
    <location>
        <begin position="112"/>
        <end position="163"/>
    </location>
</feature>
<feature type="region of interest" description="Disordered" evidence="2">
    <location>
        <begin position="171"/>
        <end position="208"/>
    </location>
</feature>
<feature type="compositionally biased region" description="Polar residues" evidence="2">
    <location>
        <begin position="181"/>
        <end position="205"/>
    </location>
</feature>
<reference key="1">
    <citation type="journal article" date="1991" name="Proc. Natl. Acad. Sci. U.S.A.">
        <title>A myogenic factor from sea urchin embryos capable of programming muscle differentiation in mammalian cells.</title>
        <authorList>
            <person name="Venuti J.M."/>
            <person name="Goldberg L."/>
            <person name="Chakraborty T."/>
            <person name="Olson E.N."/>
            <person name="Klein W.H."/>
        </authorList>
    </citation>
    <scope>NUCLEOTIDE SEQUENCE [MRNA]</scope>
</reference>
<accession>Q00492</accession>
<proteinExistence type="evidence at transcript level"/>
<gene>
    <name type="primary">SUM-1</name>
</gene>
<dbReference type="EMBL" id="M69052">
    <property type="protein sequence ID" value="AAA30009.1"/>
    <property type="status" value="ALT_INIT"/>
    <property type="molecule type" value="mRNA"/>
</dbReference>
<dbReference type="PIR" id="A41123">
    <property type="entry name" value="A41123"/>
</dbReference>
<dbReference type="SMR" id="Q00492"/>
<dbReference type="OrthoDB" id="10049614at2759"/>
<dbReference type="GO" id="GO:0005634">
    <property type="term" value="C:nucleus"/>
    <property type="evidence" value="ECO:0007669"/>
    <property type="project" value="UniProtKB-SubCell"/>
</dbReference>
<dbReference type="GO" id="GO:0000981">
    <property type="term" value="F:DNA-binding transcription factor activity, RNA polymerase II-specific"/>
    <property type="evidence" value="ECO:0007669"/>
    <property type="project" value="TreeGrafter"/>
</dbReference>
<dbReference type="GO" id="GO:0046983">
    <property type="term" value="F:protein dimerization activity"/>
    <property type="evidence" value="ECO:0007669"/>
    <property type="project" value="InterPro"/>
</dbReference>
<dbReference type="GO" id="GO:0000978">
    <property type="term" value="F:RNA polymerase II cis-regulatory region sequence-specific DNA binding"/>
    <property type="evidence" value="ECO:0007669"/>
    <property type="project" value="TreeGrafter"/>
</dbReference>
<dbReference type="GO" id="GO:0007517">
    <property type="term" value="P:muscle organ development"/>
    <property type="evidence" value="ECO:0007669"/>
    <property type="project" value="InterPro"/>
</dbReference>
<dbReference type="GO" id="GO:0045663">
    <property type="term" value="P:positive regulation of myoblast differentiation"/>
    <property type="evidence" value="ECO:0007669"/>
    <property type="project" value="TreeGrafter"/>
</dbReference>
<dbReference type="CDD" id="cd19699">
    <property type="entry name" value="bHLH_TS_dMYOD_like"/>
    <property type="match status" value="1"/>
</dbReference>
<dbReference type="FunFam" id="4.10.280.10:FF:000005">
    <property type="entry name" value="Myogenic factor"/>
    <property type="match status" value="1"/>
</dbReference>
<dbReference type="Gene3D" id="4.10.280.10">
    <property type="entry name" value="Helix-loop-helix DNA-binding domain"/>
    <property type="match status" value="1"/>
</dbReference>
<dbReference type="InterPro" id="IPR011598">
    <property type="entry name" value="bHLH_dom"/>
</dbReference>
<dbReference type="InterPro" id="IPR036638">
    <property type="entry name" value="HLH_DNA-bd_sf"/>
</dbReference>
<dbReference type="InterPro" id="IPR022032">
    <property type="entry name" value="Myf5"/>
</dbReference>
<dbReference type="InterPro" id="IPR002546">
    <property type="entry name" value="MyoD_N"/>
</dbReference>
<dbReference type="InterPro" id="IPR039704">
    <property type="entry name" value="Myogenic_factor"/>
</dbReference>
<dbReference type="PANTHER" id="PTHR11534">
    <property type="entry name" value="MYOGENIC FACTOR"/>
    <property type="match status" value="1"/>
</dbReference>
<dbReference type="PANTHER" id="PTHR11534:SF9">
    <property type="entry name" value="MYOGENIC-DETERMINATION PROTEIN"/>
    <property type="match status" value="1"/>
</dbReference>
<dbReference type="Pfam" id="PF01586">
    <property type="entry name" value="Basic"/>
    <property type="match status" value="1"/>
</dbReference>
<dbReference type="Pfam" id="PF00010">
    <property type="entry name" value="HLH"/>
    <property type="match status" value="1"/>
</dbReference>
<dbReference type="Pfam" id="PF12232">
    <property type="entry name" value="Myf5"/>
    <property type="match status" value="1"/>
</dbReference>
<dbReference type="SMART" id="SM00520">
    <property type="entry name" value="BASIC"/>
    <property type="match status" value="1"/>
</dbReference>
<dbReference type="SMART" id="SM00353">
    <property type="entry name" value="HLH"/>
    <property type="match status" value="1"/>
</dbReference>
<dbReference type="SUPFAM" id="SSF47459">
    <property type="entry name" value="HLH, helix-loop-helix DNA-binding domain"/>
    <property type="match status" value="1"/>
</dbReference>
<dbReference type="PROSITE" id="PS50888">
    <property type="entry name" value="BHLH"/>
    <property type="match status" value="1"/>
</dbReference>
<name>SUM1_LYTVA</name>
<sequence>MEPMRSSCRYTEMQTVSYYEGYPSTNGDMNAYNANTAINSMYANNFPHDVHPNQARNGGHCYGSDSANSSPGESCREDELEHVLAPGFHGQGERRCLMWACKACKRKNVAVDKRKAATLRERRRLRKVNEAFEALKRHTCANPNQRLPKVEILRNAIEYIEKLERLLQVEKANGDSEMDSAETSSNTSDAMTDGSSPGSYSSDKAQQYGDGYDVSSPYGYNCGNASSLDCLSLIVESITPNKGKAITSPKKATSDGLCMV</sequence>